<feature type="chain" id="PRO_0000277927" description="Isoprenyl transferase">
    <location>
        <begin position="1"/>
        <end position="226"/>
    </location>
</feature>
<feature type="active site" evidence="1">
    <location>
        <position position="12"/>
    </location>
</feature>
<feature type="active site" description="Proton acceptor" evidence="1">
    <location>
        <position position="60"/>
    </location>
</feature>
<feature type="binding site" evidence="1">
    <location>
        <position position="12"/>
    </location>
    <ligand>
        <name>Mg(2+)</name>
        <dbReference type="ChEBI" id="CHEBI:18420"/>
    </ligand>
</feature>
<feature type="binding site" evidence="1">
    <location>
        <begin position="13"/>
        <end position="16"/>
    </location>
    <ligand>
        <name>substrate</name>
    </ligand>
</feature>
<feature type="binding site" evidence="1">
    <location>
        <position position="17"/>
    </location>
    <ligand>
        <name>substrate</name>
    </ligand>
</feature>
<feature type="binding site" evidence="1">
    <location>
        <position position="25"/>
    </location>
    <ligand>
        <name>substrate</name>
    </ligand>
</feature>
<feature type="binding site" evidence="1">
    <location>
        <position position="29"/>
    </location>
    <ligand>
        <name>substrate</name>
    </ligand>
</feature>
<feature type="binding site" evidence="1">
    <location>
        <begin position="57"/>
        <end position="59"/>
    </location>
    <ligand>
        <name>substrate</name>
    </ligand>
</feature>
<feature type="binding site" evidence="1">
    <location>
        <position position="61"/>
    </location>
    <ligand>
        <name>substrate</name>
    </ligand>
</feature>
<feature type="binding site" evidence="1">
    <location>
        <position position="63"/>
    </location>
    <ligand>
        <name>substrate</name>
    </ligand>
</feature>
<feature type="binding site" evidence="1">
    <location>
        <position position="174"/>
    </location>
    <ligand>
        <name>substrate</name>
    </ligand>
</feature>
<feature type="binding site" evidence="1">
    <location>
        <begin position="180"/>
        <end position="182"/>
    </location>
    <ligand>
        <name>substrate</name>
    </ligand>
</feature>
<feature type="binding site" evidence="1">
    <location>
        <position position="193"/>
    </location>
    <ligand>
        <name>Mg(2+)</name>
        <dbReference type="ChEBI" id="CHEBI:18420"/>
    </ligand>
</feature>
<name>ISPT_RICBR</name>
<gene>
    <name evidence="1" type="primary">uppS</name>
    <name type="ordered locus">RBE_0745</name>
</gene>
<accession>Q1RII8</accession>
<keyword id="KW-0460">Magnesium</keyword>
<keyword id="KW-0479">Metal-binding</keyword>
<keyword id="KW-0808">Transferase</keyword>
<dbReference type="EC" id="2.5.1.-" evidence="1"/>
<dbReference type="EMBL" id="CP000087">
    <property type="protein sequence ID" value="ABE04826.1"/>
    <property type="status" value="ALT_INIT"/>
    <property type="molecule type" value="Genomic_DNA"/>
</dbReference>
<dbReference type="RefSeq" id="WP_041804680.1">
    <property type="nucleotide sequence ID" value="NC_007940.1"/>
</dbReference>
<dbReference type="SMR" id="Q1RII8"/>
<dbReference type="KEGG" id="rbe:RBE_0745"/>
<dbReference type="eggNOG" id="COG0020">
    <property type="taxonomic scope" value="Bacteria"/>
</dbReference>
<dbReference type="HOGENOM" id="CLU_038505_1_1_5"/>
<dbReference type="OrthoDB" id="4191603at2"/>
<dbReference type="Proteomes" id="UP000001951">
    <property type="component" value="Chromosome"/>
</dbReference>
<dbReference type="GO" id="GO:0045547">
    <property type="term" value="F:ditrans,polycis-polyprenyl diphosphate synthase [(2E,6E)-farnesyl diphosphate specific] activity"/>
    <property type="evidence" value="ECO:0007669"/>
    <property type="project" value="TreeGrafter"/>
</dbReference>
<dbReference type="GO" id="GO:0000287">
    <property type="term" value="F:magnesium ion binding"/>
    <property type="evidence" value="ECO:0007669"/>
    <property type="project" value="UniProtKB-UniRule"/>
</dbReference>
<dbReference type="GO" id="GO:0016094">
    <property type="term" value="P:polyprenol biosynthetic process"/>
    <property type="evidence" value="ECO:0007669"/>
    <property type="project" value="TreeGrafter"/>
</dbReference>
<dbReference type="CDD" id="cd00475">
    <property type="entry name" value="Cis_IPPS"/>
    <property type="match status" value="1"/>
</dbReference>
<dbReference type="Gene3D" id="3.40.1180.10">
    <property type="entry name" value="Decaprenyl diphosphate synthase-like"/>
    <property type="match status" value="1"/>
</dbReference>
<dbReference type="HAMAP" id="MF_01139">
    <property type="entry name" value="ISPT"/>
    <property type="match status" value="1"/>
</dbReference>
<dbReference type="InterPro" id="IPR001441">
    <property type="entry name" value="UPP_synth-like"/>
</dbReference>
<dbReference type="InterPro" id="IPR018520">
    <property type="entry name" value="UPP_synth-like_CS"/>
</dbReference>
<dbReference type="InterPro" id="IPR036424">
    <property type="entry name" value="UPP_synth-like_sf"/>
</dbReference>
<dbReference type="NCBIfam" id="TIGR00055">
    <property type="entry name" value="uppS"/>
    <property type="match status" value="1"/>
</dbReference>
<dbReference type="PANTHER" id="PTHR10291:SF0">
    <property type="entry name" value="DEHYDRODOLICHYL DIPHOSPHATE SYNTHASE 2"/>
    <property type="match status" value="1"/>
</dbReference>
<dbReference type="PANTHER" id="PTHR10291">
    <property type="entry name" value="DEHYDRODOLICHYL DIPHOSPHATE SYNTHASE FAMILY MEMBER"/>
    <property type="match status" value="1"/>
</dbReference>
<dbReference type="Pfam" id="PF01255">
    <property type="entry name" value="Prenyltransf"/>
    <property type="match status" value="1"/>
</dbReference>
<dbReference type="SUPFAM" id="SSF64005">
    <property type="entry name" value="Undecaprenyl diphosphate synthase"/>
    <property type="match status" value="1"/>
</dbReference>
<dbReference type="PROSITE" id="PS01066">
    <property type="entry name" value="UPP_SYNTHASE"/>
    <property type="match status" value="1"/>
</dbReference>
<reference key="1">
    <citation type="journal article" date="2006" name="PLoS Genet.">
        <title>Genome sequence of Rickettsia bellii illuminates the role of amoebae in gene exchanges between intracellular pathogens.</title>
        <authorList>
            <person name="Ogata H."/>
            <person name="La Scola B."/>
            <person name="Audic S."/>
            <person name="Renesto P."/>
            <person name="Blanc G."/>
            <person name="Robert C."/>
            <person name="Fournier P.-E."/>
            <person name="Claverie J.-M."/>
            <person name="Raoult D."/>
        </authorList>
    </citation>
    <scope>NUCLEOTIDE SEQUENCE [LARGE SCALE GENOMIC DNA]</scope>
    <source>
        <strain>RML369-C</strain>
    </source>
</reference>
<protein>
    <recommendedName>
        <fullName evidence="1">Isoprenyl transferase</fullName>
        <ecNumber evidence="1">2.5.1.-</ecNumber>
    </recommendedName>
</protein>
<proteinExistence type="inferred from homology"/>
<comment type="function">
    <text evidence="1">Catalyzes the condensation of isopentenyl diphosphate (IPP) with allylic pyrophosphates generating different type of terpenoids.</text>
</comment>
<comment type="cofactor">
    <cofactor evidence="1">
        <name>Mg(2+)</name>
        <dbReference type="ChEBI" id="CHEBI:18420"/>
    </cofactor>
    <text evidence="1">Binds 2 magnesium ions per subunit.</text>
</comment>
<comment type="subunit">
    <text evidence="1">Homodimer.</text>
</comment>
<comment type="similarity">
    <text evidence="1">Belongs to the UPP synthase family.</text>
</comment>
<comment type="sequence caution" evidence="2">
    <conflict type="erroneous initiation">
        <sequence resource="EMBL-CDS" id="ABE04826"/>
    </conflict>
    <text>Extended N-terminus.</text>
</comment>
<sequence length="226" mass="26069">MTNIKHLAIIMDGNARWAATHNLPKSEGHRAGADKVHELLPEFINLKIPYITLYTFSSENWQRSNTEISFLMRLLNIYLKKELDNLHKNGIKIKVIGRLNLLSDSLQKQINNAIELTKDNNKLTLCIAFSYGSRQEITDACTKIIASGKTEILESDIQNALYDPEMPDVDLLIRPGGVFRISNFLLWQAAYAELYFSQKYWPDFNKEDIINAIDDYSKRKRTFGKR</sequence>
<evidence type="ECO:0000255" key="1">
    <source>
        <dbReference type="HAMAP-Rule" id="MF_01139"/>
    </source>
</evidence>
<evidence type="ECO:0000305" key="2"/>
<organism>
    <name type="scientific">Rickettsia bellii (strain RML369-C)</name>
    <dbReference type="NCBI Taxonomy" id="336407"/>
    <lineage>
        <taxon>Bacteria</taxon>
        <taxon>Pseudomonadati</taxon>
        <taxon>Pseudomonadota</taxon>
        <taxon>Alphaproteobacteria</taxon>
        <taxon>Rickettsiales</taxon>
        <taxon>Rickettsiaceae</taxon>
        <taxon>Rickettsieae</taxon>
        <taxon>Rickettsia</taxon>
        <taxon>belli group</taxon>
    </lineage>
</organism>